<sequence length="253" mass="29368">HVVVGTPGRVFDMLRRQSLRPDNIKMFVLDEADEMLSRGFKDQIYDIFQLLPPKIQVGIFSATMPPEALEITRKFMNKPVRILVKRDELTLEGIKQFYVNVDKEEWKLETLCDLYETLAITQSVIFVNTRRKVDWLTDKMRGRDHTVSATHGDMDQNTRDIIMREFRSGSSRVLITTDLLARGIDVQQVSLVINYDLPTQPENYLHRIGRSGRFGRKGVSINFVTKDDERMLFDIQKFYNVVIEELPANVADL</sequence>
<proteinExistence type="evidence at transcript level"/>
<protein>
    <recommendedName>
        <fullName>Eukaryotic initiation factor 4A-6</fullName>
        <shortName>eIF-4A-6</shortName>
        <ecNumber>3.6.4.13</ecNumber>
    </recommendedName>
    <alternativeName>
        <fullName>ATP-dependent RNA helicase eIF4A-6</fullName>
    </alternativeName>
</protein>
<organism>
    <name type="scientific">Nicotiana tabacum</name>
    <name type="common">Common tobacco</name>
    <dbReference type="NCBI Taxonomy" id="4097"/>
    <lineage>
        <taxon>Eukaryota</taxon>
        <taxon>Viridiplantae</taxon>
        <taxon>Streptophyta</taxon>
        <taxon>Embryophyta</taxon>
        <taxon>Tracheophyta</taxon>
        <taxon>Spermatophyta</taxon>
        <taxon>Magnoliopsida</taxon>
        <taxon>eudicotyledons</taxon>
        <taxon>Gunneridae</taxon>
        <taxon>Pentapetalae</taxon>
        <taxon>asterids</taxon>
        <taxon>lamiids</taxon>
        <taxon>Solanales</taxon>
        <taxon>Solanaceae</taxon>
        <taxon>Nicotianoideae</taxon>
        <taxon>Nicotianeae</taxon>
        <taxon>Nicotiana</taxon>
    </lineage>
</organism>
<keyword id="KW-0067">ATP-binding</keyword>
<keyword id="KW-0347">Helicase</keyword>
<keyword id="KW-0378">Hydrolase</keyword>
<keyword id="KW-0396">Initiation factor</keyword>
<keyword id="KW-0547">Nucleotide-binding</keyword>
<keyword id="KW-0648">Protein biosynthesis</keyword>
<keyword id="KW-1185">Reference proteome</keyword>
<keyword id="KW-0694">RNA-binding</keyword>
<accession>Q40469</accession>
<comment type="function">
    <text evidence="1">ATP-dependent RNA helicase which is a subunit of the eIF4F complex involved in cap recognition and is required for mRNA binding to ribosome. In the current model of translation initiation, eIF4A unwinds RNA secondary structures in the 5'-UTR of mRNAs which is necessary to allow efficient binding of the small ribosomal subunit, and subsequent scanning for the initiator codon (By similarity).</text>
</comment>
<comment type="catalytic activity">
    <reaction>
        <text>ATP + H2O = ADP + phosphate + H(+)</text>
        <dbReference type="Rhea" id="RHEA:13065"/>
        <dbReference type="ChEBI" id="CHEBI:15377"/>
        <dbReference type="ChEBI" id="CHEBI:15378"/>
        <dbReference type="ChEBI" id="CHEBI:30616"/>
        <dbReference type="ChEBI" id="CHEBI:43474"/>
        <dbReference type="ChEBI" id="CHEBI:456216"/>
        <dbReference type="EC" id="3.6.4.13"/>
    </reaction>
</comment>
<comment type="subunit">
    <text evidence="1">eIF4F is a multi-subunit complex, the composition of which varies with external and internal environmental conditions. It is composed of at least EIF4A, EIF4E and EIF4G (By similarity).</text>
</comment>
<comment type="similarity">
    <text evidence="4">Belongs to the DEAD box helicase family. eIF4A subfamily.</text>
</comment>
<reference key="1">
    <citation type="journal article" date="1994" name="Plant Mol. Biol.">
        <title>Characterization of the tobacco eIF-4A gene family.</title>
        <authorList>
            <person name="Owttrim G.W."/>
            <person name="Mandel T."/>
            <person name="Trachsel H."/>
            <person name="Thomas A.A."/>
            <person name="Kuhlemeier C."/>
        </authorList>
    </citation>
    <scope>NUCLEOTIDE SEQUENCE [MRNA]</scope>
    <source>
        <strain>cv. SR1</strain>
    </source>
</reference>
<feature type="chain" id="PRO_0000054953" description="Eukaryotic initiation factor 4A-6">
    <location>
        <begin position="1" status="less than"/>
        <end position="253" status="greater than"/>
    </location>
</feature>
<feature type="domain" description="Helicase ATP-binding" evidence="2">
    <location>
        <begin position="1" status="less than"/>
        <end position="82"/>
    </location>
</feature>
<feature type="domain" description="Helicase C-terminal" evidence="3">
    <location>
        <begin position="93"/>
        <end position="253" status="greater than"/>
    </location>
</feature>
<feature type="short sequence motif" description="DEAD box">
    <location>
        <begin position="30"/>
        <end position="33"/>
    </location>
</feature>
<feature type="non-terminal residue">
    <location>
        <position position="1"/>
    </location>
</feature>
<feature type="non-terminal residue">
    <location>
        <position position="253"/>
    </location>
</feature>
<dbReference type="EC" id="3.6.4.13"/>
<dbReference type="EMBL" id="X79139">
    <property type="protein sequence ID" value="CAA55740.1"/>
    <property type="molecule type" value="mRNA"/>
</dbReference>
<dbReference type="PIR" id="S52021">
    <property type="entry name" value="S52021"/>
</dbReference>
<dbReference type="SMR" id="Q40469"/>
<dbReference type="STRING" id="4097.Q40469"/>
<dbReference type="PaxDb" id="4097-Q40469"/>
<dbReference type="Proteomes" id="UP000084051">
    <property type="component" value="Unplaced"/>
</dbReference>
<dbReference type="GO" id="GO:0010494">
    <property type="term" value="C:cytoplasmic stress granule"/>
    <property type="evidence" value="ECO:0000318"/>
    <property type="project" value="GO_Central"/>
</dbReference>
<dbReference type="GO" id="GO:0005524">
    <property type="term" value="F:ATP binding"/>
    <property type="evidence" value="ECO:0007669"/>
    <property type="project" value="UniProtKB-KW"/>
</dbReference>
<dbReference type="GO" id="GO:0016887">
    <property type="term" value="F:ATP hydrolysis activity"/>
    <property type="evidence" value="ECO:0007669"/>
    <property type="project" value="RHEA"/>
</dbReference>
<dbReference type="GO" id="GO:0003723">
    <property type="term" value="F:RNA binding"/>
    <property type="evidence" value="ECO:0007669"/>
    <property type="project" value="UniProtKB-KW"/>
</dbReference>
<dbReference type="GO" id="GO:0003724">
    <property type="term" value="F:RNA helicase activity"/>
    <property type="evidence" value="ECO:0007669"/>
    <property type="project" value="UniProtKB-EC"/>
</dbReference>
<dbReference type="GO" id="GO:0003743">
    <property type="term" value="F:translation initiation factor activity"/>
    <property type="evidence" value="ECO:0000318"/>
    <property type="project" value="GO_Central"/>
</dbReference>
<dbReference type="GO" id="GO:0002183">
    <property type="term" value="P:cytoplasmic translational initiation"/>
    <property type="evidence" value="ECO:0000318"/>
    <property type="project" value="GO_Central"/>
</dbReference>
<dbReference type="CDD" id="cd18787">
    <property type="entry name" value="SF2_C_DEAD"/>
    <property type="match status" value="1"/>
</dbReference>
<dbReference type="FunFam" id="3.40.50.300:FF:000031">
    <property type="entry name" value="Eukaryotic initiation factor 4A-III"/>
    <property type="match status" value="1"/>
</dbReference>
<dbReference type="Gene3D" id="3.40.50.300">
    <property type="entry name" value="P-loop containing nucleotide triphosphate hydrolases"/>
    <property type="match status" value="2"/>
</dbReference>
<dbReference type="InterPro" id="IPR011545">
    <property type="entry name" value="DEAD/DEAH_box_helicase_dom"/>
</dbReference>
<dbReference type="InterPro" id="IPR014001">
    <property type="entry name" value="Helicase_ATP-bd"/>
</dbReference>
<dbReference type="InterPro" id="IPR001650">
    <property type="entry name" value="Helicase_C-like"/>
</dbReference>
<dbReference type="InterPro" id="IPR027417">
    <property type="entry name" value="P-loop_NTPase"/>
</dbReference>
<dbReference type="InterPro" id="IPR000629">
    <property type="entry name" value="RNA-helicase_DEAD-box_CS"/>
</dbReference>
<dbReference type="PANTHER" id="PTHR47958">
    <property type="entry name" value="ATP-DEPENDENT RNA HELICASE DBP3"/>
    <property type="match status" value="1"/>
</dbReference>
<dbReference type="Pfam" id="PF00270">
    <property type="entry name" value="DEAD"/>
    <property type="match status" value="1"/>
</dbReference>
<dbReference type="Pfam" id="PF00271">
    <property type="entry name" value="Helicase_C"/>
    <property type="match status" value="1"/>
</dbReference>
<dbReference type="SMART" id="SM00490">
    <property type="entry name" value="HELICc"/>
    <property type="match status" value="1"/>
</dbReference>
<dbReference type="SUPFAM" id="SSF52540">
    <property type="entry name" value="P-loop containing nucleoside triphosphate hydrolases"/>
    <property type="match status" value="1"/>
</dbReference>
<dbReference type="PROSITE" id="PS00039">
    <property type="entry name" value="DEAD_ATP_HELICASE"/>
    <property type="match status" value="1"/>
</dbReference>
<dbReference type="PROSITE" id="PS51192">
    <property type="entry name" value="HELICASE_ATP_BIND_1"/>
    <property type="match status" value="1"/>
</dbReference>
<dbReference type="PROSITE" id="PS51194">
    <property type="entry name" value="HELICASE_CTER"/>
    <property type="match status" value="1"/>
</dbReference>
<name>IF4A6_TOBAC</name>
<evidence type="ECO:0000250" key="1"/>
<evidence type="ECO:0000255" key="2">
    <source>
        <dbReference type="PROSITE-ProRule" id="PRU00541"/>
    </source>
</evidence>
<evidence type="ECO:0000255" key="3">
    <source>
        <dbReference type="PROSITE-ProRule" id="PRU00542"/>
    </source>
</evidence>
<evidence type="ECO:0000305" key="4"/>